<gene>
    <name evidence="1" type="primary">ycf2-A</name>
</gene>
<gene>
    <name evidence="1" type="primary">ycf2-B</name>
</gene>
<feature type="chain" id="PRO_0000276552" description="Protein Ycf2">
    <location>
        <begin position="1"/>
        <end position="2298"/>
    </location>
</feature>
<feature type="binding site" evidence="1">
    <location>
        <begin position="1638"/>
        <end position="1645"/>
    </location>
    <ligand>
        <name>ATP</name>
        <dbReference type="ChEBI" id="CHEBI:30616"/>
    </ligand>
</feature>
<dbReference type="EMBL" id="AP009123">
    <property type="protein sequence ID" value="BAF41290.1"/>
    <property type="molecule type" value="Genomic_DNA"/>
</dbReference>
<dbReference type="EMBL" id="AP009123">
    <property type="protein sequence ID" value="BAF41308.1"/>
    <property type="molecule type" value="Genomic_DNA"/>
</dbReference>
<dbReference type="GO" id="GO:0009570">
    <property type="term" value="C:chloroplast stroma"/>
    <property type="evidence" value="ECO:0007669"/>
    <property type="project" value="UniProtKB-SubCell"/>
</dbReference>
<dbReference type="GO" id="GO:0005524">
    <property type="term" value="F:ATP binding"/>
    <property type="evidence" value="ECO:0007669"/>
    <property type="project" value="UniProtKB-KW"/>
</dbReference>
<dbReference type="GO" id="GO:0016887">
    <property type="term" value="F:ATP hydrolysis activity"/>
    <property type="evidence" value="ECO:0007669"/>
    <property type="project" value="InterPro"/>
</dbReference>
<dbReference type="CDD" id="cd19505">
    <property type="entry name" value="RecA-like_Ycf2"/>
    <property type="match status" value="1"/>
</dbReference>
<dbReference type="Gene3D" id="3.40.50.300">
    <property type="entry name" value="P-loop containing nucleotide triphosphate hydrolases"/>
    <property type="match status" value="1"/>
</dbReference>
<dbReference type="HAMAP" id="MF_01330">
    <property type="entry name" value="Ycf2"/>
    <property type="match status" value="1"/>
</dbReference>
<dbReference type="InterPro" id="IPR003959">
    <property type="entry name" value="ATPase_AAA_core"/>
</dbReference>
<dbReference type="InterPro" id="IPR027417">
    <property type="entry name" value="P-loop_NTPase"/>
</dbReference>
<dbReference type="InterPro" id="IPR008543">
    <property type="entry name" value="Uncharacterised_Ycf2"/>
</dbReference>
<dbReference type="InterPro" id="IPR056777">
    <property type="entry name" value="Ycf2_N"/>
</dbReference>
<dbReference type="PANTHER" id="PTHR33078:SF92">
    <property type="entry name" value="PROTEIN YCF2"/>
    <property type="match status" value="1"/>
</dbReference>
<dbReference type="PANTHER" id="PTHR33078">
    <property type="entry name" value="PROTEIN YCF2-RELATED"/>
    <property type="match status" value="1"/>
</dbReference>
<dbReference type="Pfam" id="PF00004">
    <property type="entry name" value="AAA"/>
    <property type="match status" value="1"/>
</dbReference>
<dbReference type="Pfam" id="PF05695">
    <property type="entry name" value="Ycf2"/>
    <property type="match status" value="1"/>
</dbReference>
<dbReference type="SUPFAM" id="SSF52540">
    <property type="entry name" value="P-loop containing nucleoside triphosphate hydrolases"/>
    <property type="match status" value="1"/>
</dbReference>
<sequence length="2298" mass="269233">MKGHQFKSWIFELREILREIKNSHYFLDSWTQFNSVGSFIHIFFHQERFIKLLDPRIWSILLSRNSQGSTSNRYFTIKGVVLFVVAVLIYRINNRNMVERKNLYLTGLLPIPMNSIGPRNDTLEESFGSSNINRLIVSLLYLPKGKKISESCFLDPKESTWVLPITKKCIMPESNRDSRWWRNWIGKKRDSSCKISNETVAGIEISFKEKDIKYLEFLFVYYMDDSIRKDHDWELFDRLSPSKRRNIINLNSGQLFEILVKDWICYLMFAFREKIPIEVEGFFKQQGAGSTIQSNDIEHVSHLFSRGKWAISLQNCAQFHMWQFRQDLFVSWGKNPHESDFLRNISRENWIWLDNVWLVNRDRFFSKVRNVSSNIQYDSTRSSFVQVTDSRQLKGSSDQSRDRFDSISNEDSEYHTLINQREIQQLKERSILWDPSFLQTERTEIESDRFPKCLSGYSSMSRLFTEREKRMNNHLLPEEIEEFLGNPTRSIRSFFSDRWSELHQGSNPTERSTRDQKLLKKEQDVSFVPSRRSENKEIVNIFKIITYLQNTVSFHPISSDPGCDMVPKDELGSSNKISFLNKNPFFDLFHLFHDQNRRGYTLHHDFESEERFQEMADLFTLSITEPDLVYYKGFAFSIDSYGLDQKQFLNEVFNSRDESKKKSLSALPPIFYEENESFYRRIRKKWVRISCGNELEDPKPKIVVFASNNIMEAVNQDRLIRNLIQIQYSTYGYIRNVLNRFIKKNRSDRNFEYGILRDQIGNDTLNHRTIMKYTINQHLSNLKKSQKKWFDPLILISRTERSMNRDPNAYRYKWSNGSKNFQEHLEHFVSEQKSRFQVVFVRLRINQYSIDWSEVIDKKDLSKSLRFFLSKLLLFLSKLLLFLSNSLPFFFVSFGNIPIHRSEIHIYELKGPNDQLCNQLLESIGLQIVHLKKLKPFLLDDHNTSQKPKFLINGGTISPFLVNKIPKWMIDSFHTRNNRRKSFDNMDFSMISHDQDNWLNPVKPFHRSSLISSFYKANRLRFLNNPHHFCFYCNKRFPFYVEKARINNYDFTYGQFLNILFIRNKIFSLCGGKKKHAFLGRDTISPSPIESQVSNIFISNDFPQSGDERYNLYKSFQFAIRSDPLVRRAIYSIADISGTPLTEGQIVNFERTYCQPLSDMNPSDSEEKNLHQYLNFNSNMGLIHTPCSEKYLPSEKRKKRSLCLKKCVEKGWMYRTFQRDSAFSTLSKRNLFQTYMPWFLTSTGYKYLNLIFLDTFSDLLPILSSSQKFVSIFHDIMHGSDISWRILQKKLCLPQWNLISEISSKCLHNFLLSEEMIHRNNESPLISTHLRSPNVQEFLYSILFLLLVAGYLVRTHLLFVSRAYSELQTEFEKVKSLMIPSYMIELRKLLDRYPTSELNSFWLKNLFLVALEQLGDSLEEIRGSAFGGNMLWGGGPAYGVKSIRSKKKYLNINLIDIIDLISIIPNPINRIIFSRNTRHLSHTSKEIYSLIRKRKNVSGDWIDEKIESWVANSDSIDDKEREFLVQFSTLTTEKRIDQILLSLTHSDHLSKNDSGYQMIEQPGPIYLRYLVDIHKKYLMNYEFNTSCLAERRIFLAHYQTITYSQTSCGANSFHFPSRGKPFSLRLALSPSRGILVIGSIGTGRSYLFKYLATNSYVPFITVFLNKFLDNKLKGFLIDDIDIDDSDDIDASDDIDASDAIDDSDAIDRDLDTELELLTMMNALTMDMMSEIDRFYITLQFELAKAMSPCIIWIPNIHDLDVNEANYLSLGLLVNYLSKDCERCSTRNILVIASTHIPQKVDPTLIAPNKLNTCIKIRRLLIPQQRKHFFTLSYTRGFHLEKKMFHTNGFGSITVGSNARDLVALTNEALSISITQKKSIIDTNTIRSALHRQTWDLRSQVRSVQDHGILFYQIGRAVVQNVLLSNCPLDPISIYMKKKSCNEGDSYLYKWYFELGTSMKKLTILLYLLSCSAGSVAQDLWSLPGPDEKNGITSYGFVENDSDLVHGLLEVEGALVGSSRTEKDCGQFDNDRVTLLLRSEPGNPLYMMQNGSCSIVDQRNLYEKYESEFEEGEGEGVLDPQQIEEDLFNHIVWAPRIWRPWGFLFDCIERPNELGFPYWAGSFRGKRIIYDEKDELQENDSAFLQSGTMQYQARDRSSKEQGFFRISQFIWDPADPLFFLFKDQPFVSVFSHREFFADEEMSKGLLTSQTDPPTSIYKRWFIKNTQEKHFELLIHRQRWLRTNSSLSNANGFFRSNTPSESYQYLSNLFLSNGRLLDQMTKTLLRKRWLFPDEMKIGFM</sequence>
<protein>
    <recommendedName>
        <fullName evidence="1">Protein Ycf2</fullName>
    </recommendedName>
</protein>
<name>YCF2_GOSBA</name>
<keyword id="KW-0067">ATP-binding</keyword>
<keyword id="KW-0150">Chloroplast</keyword>
<keyword id="KW-0547">Nucleotide-binding</keyword>
<keyword id="KW-0934">Plastid</keyword>
<organism>
    <name type="scientific">Gossypium barbadense</name>
    <name type="common">Sea Island cotton</name>
    <name type="synonym">Hibiscus barbadensis</name>
    <dbReference type="NCBI Taxonomy" id="3634"/>
    <lineage>
        <taxon>Eukaryota</taxon>
        <taxon>Viridiplantae</taxon>
        <taxon>Streptophyta</taxon>
        <taxon>Embryophyta</taxon>
        <taxon>Tracheophyta</taxon>
        <taxon>Spermatophyta</taxon>
        <taxon>Magnoliopsida</taxon>
        <taxon>eudicotyledons</taxon>
        <taxon>Gunneridae</taxon>
        <taxon>Pentapetalae</taxon>
        <taxon>rosids</taxon>
        <taxon>malvids</taxon>
        <taxon>Malvales</taxon>
        <taxon>Malvaceae</taxon>
        <taxon>Malvoideae</taxon>
        <taxon>Gossypium</taxon>
    </lineage>
</organism>
<evidence type="ECO:0000255" key="1">
    <source>
        <dbReference type="HAMAP-Rule" id="MF_01330"/>
    </source>
</evidence>
<reference key="1">
    <citation type="journal article" date="2006" name="Genes Genet. Syst.">
        <title>Complete nucleotide sequence of the cotton (Gossypium barbadense L.) chloroplast genome with a comparative analysis of sequences among 9 dicot plants.</title>
        <authorList>
            <person name="Ibrahim R.I.H."/>
            <person name="Azuma J."/>
            <person name="Sakamoto M."/>
        </authorList>
    </citation>
    <scope>NUCLEOTIDE SEQUENCE [LARGE SCALE GENOMIC DNA]</scope>
</reference>
<accession>A0ZZ78</accession>
<proteinExistence type="inferred from homology"/>
<comment type="function">
    <text>Probable ATPase of unknown function. Its presence in a non-photosynthetic plant (Epifagus virginiana) and experiments in tobacco indicate that it has an essential function which is probably not related to photosynthesis.</text>
</comment>
<comment type="subcellular location">
    <subcellularLocation>
        <location evidence="1">Plastid</location>
        <location evidence="1">Chloroplast stroma</location>
    </subcellularLocation>
</comment>
<comment type="similarity">
    <text evidence="1">Belongs to the Ycf2 family.</text>
</comment>
<geneLocation type="chloroplast"/>